<gene>
    <name type="primary">MC1R</name>
    <name type="synonym">MSHR</name>
</gene>
<keyword id="KW-1003">Cell membrane</keyword>
<keyword id="KW-0297">G-protein coupled receptor</keyword>
<keyword id="KW-0325">Glycoprotein</keyword>
<keyword id="KW-0449">Lipoprotein</keyword>
<keyword id="KW-0472">Membrane</keyword>
<keyword id="KW-0564">Palmitate</keyword>
<keyword id="KW-0675">Receptor</keyword>
<keyword id="KW-0807">Transducer</keyword>
<keyword id="KW-0812">Transmembrane</keyword>
<keyword id="KW-1133">Transmembrane helix</keyword>
<protein>
    <recommendedName>
        <fullName>Melanocyte-stimulating hormone receptor</fullName>
        <shortName>MSH-R</shortName>
    </recommendedName>
    <alternativeName>
        <fullName>Melanocortin receptor 1</fullName>
        <shortName>MC1-R</shortName>
    </alternativeName>
</protein>
<organism>
    <name type="scientific">Alces alces alces</name>
    <name type="common">European moose</name>
    <name type="synonym">Elk</name>
    <dbReference type="NCBI Taxonomy" id="9853"/>
    <lineage>
        <taxon>Eukaryota</taxon>
        <taxon>Metazoa</taxon>
        <taxon>Chordata</taxon>
        <taxon>Craniata</taxon>
        <taxon>Vertebrata</taxon>
        <taxon>Euteleostomi</taxon>
        <taxon>Mammalia</taxon>
        <taxon>Eutheria</taxon>
        <taxon>Laurasiatheria</taxon>
        <taxon>Artiodactyla</taxon>
        <taxon>Ruminantia</taxon>
        <taxon>Pecora</taxon>
        <taxon>Cervidae</taxon>
        <taxon>Odocoileinae</taxon>
        <taxon>Alces</taxon>
    </lineage>
</organism>
<sequence>MPVLGSQRRLLGSLNCTPPATFSLTLAPNRTGPQCLEVSIPDGLFLSLGLVSLVENVLVVAAIAKNRNLHSPMYYFICCLAVSDLLVSVSNVLETAVMLLLEAGALAARAAVVQQLDNVIDVLICGSMVSSLCFLGAIAMDRYISIFYALRYHSVVTLPRAWRIIAAIWVASILTSLLFITYYNHTVVLLCLVGFFIAMLALMAILYVHMLARACQHARDIARLQKRQHPIHQGFGLKGAATLTILLGVFFLCWGPFFLHLSLIVLCPQHPTCGCIFKNFNLFLALIICNAIVDPLIYAFRSQELRKTLQEVLQCSW</sequence>
<evidence type="ECO:0000250" key="1">
    <source>
        <dbReference type="UniProtKB" id="Q01726"/>
    </source>
</evidence>
<evidence type="ECO:0000255" key="2"/>
<evidence type="ECO:0000255" key="3">
    <source>
        <dbReference type="PROSITE-ProRule" id="PRU00521"/>
    </source>
</evidence>
<dbReference type="EMBL" id="Y13961">
    <property type="protein sequence ID" value="CAA74295.1"/>
    <property type="molecule type" value="Genomic_DNA"/>
</dbReference>
<dbReference type="SMR" id="P56442"/>
<dbReference type="GlyCosmos" id="P56442">
    <property type="glycosylation" value="1 site, No reported glycans"/>
</dbReference>
<dbReference type="GO" id="GO:0005886">
    <property type="term" value="C:plasma membrane"/>
    <property type="evidence" value="ECO:0000250"/>
    <property type="project" value="UniProtKB"/>
</dbReference>
<dbReference type="GO" id="GO:0004980">
    <property type="term" value="F:melanocyte-stimulating hormone receptor activity"/>
    <property type="evidence" value="ECO:0007669"/>
    <property type="project" value="InterPro"/>
</dbReference>
<dbReference type="FunFam" id="1.20.1070.10:FF:000211">
    <property type="entry name" value="Melanocyte-stimulating hormone receptor"/>
    <property type="match status" value="1"/>
</dbReference>
<dbReference type="Gene3D" id="1.20.1070.10">
    <property type="entry name" value="Rhodopsin 7-helix transmembrane proteins"/>
    <property type="match status" value="1"/>
</dbReference>
<dbReference type="InterPro" id="IPR000276">
    <property type="entry name" value="GPCR_Rhodpsn"/>
</dbReference>
<dbReference type="InterPro" id="IPR017452">
    <property type="entry name" value="GPCR_Rhodpsn_7TM"/>
</dbReference>
<dbReference type="InterPro" id="IPR001671">
    <property type="entry name" value="Melcrt_ACTH_rcpt"/>
</dbReference>
<dbReference type="InterPro" id="IPR000761">
    <property type="entry name" value="MSH_rcpt"/>
</dbReference>
<dbReference type="PANTHER" id="PTHR22750">
    <property type="entry name" value="G-PROTEIN COUPLED RECEPTOR"/>
    <property type="match status" value="1"/>
</dbReference>
<dbReference type="Pfam" id="PF00001">
    <property type="entry name" value="7tm_1"/>
    <property type="match status" value="1"/>
</dbReference>
<dbReference type="PRINTS" id="PR00237">
    <property type="entry name" value="GPCRRHODOPSN"/>
</dbReference>
<dbReference type="PRINTS" id="PR00534">
    <property type="entry name" value="MCRFAMILY"/>
</dbReference>
<dbReference type="PRINTS" id="PR00536">
    <property type="entry name" value="MELNOCYTESHR"/>
</dbReference>
<dbReference type="SMART" id="SM01381">
    <property type="entry name" value="7TM_GPCR_Srsx"/>
    <property type="match status" value="1"/>
</dbReference>
<dbReference type="SUPFAM" id="SSF81321">
    <property type="entry name" value="Family A G protein-coupled receptor-like"/>
    <property type="match status" value="1"/>
</dbReference>
<dbReference type="PROSITE" id="PS00237">
    <property type="entry name" value="G_PROTEIN_RECEP_F1_1"/>
    <property type="match status" value="1"/>
</dbReference>
<dbReference type="PROSITE" id="PS50262">
    <property type="entry name" value="G_PROTEIN_RECEP_F1_2"/>
    <property type="match status" value="1"/>
</dbReference>
<comment type="function">
    <text evidence="1">Receptor for MSH (alpha, beta and gamma) and ACTH. The activity of this receptor is mediated by G proteins which activate adenylate cyclase. Mediates melanogenesis, the production of eumelanin (black/brown) and phaeomelanin (red/yellow), via regulation of cAMP signaling in melanocytes.</text>
</comment>
<comment type="subunit">
    <text evidence="1">Interacts with MGRN1, but does not undergo MGRN1-mediated ubiquitination; this interaction competes with GNAS-binding and thus inhibits agonist-induced cAMP production. Interacts with OPN3; the interaction results in a decrease in MC1R-mediated cAMP signaling and ultimately a decrease in melanin production in melanocytes.</text>
</comment>
<comment type="subcellular location">
    <subcellularLocation>
        <location evidence="1">Cell membrane</location>
        <topology evidence="2">Multi-pass membrane protein</topology>
    </subcellularLocation>
</comment>
<comment type="similarity">
    <text evidence="3">Belongs to the G-protein coupled receptor 1 family.</text>
</comment>
<name>MSHR_ALCAA</name>
<reference key="1">
    <citation type="journal article" date="1999" name="Hereditas">
        <title>The melanocyte-stimulating hormone receptor (MC1-R) gene as a tool in evolutionary studies of artiodactyles.</title>
        <authorList>
            <person name="Klungland H."/>
            <person name="Roed K.H."/>
            <person name="Nesbo C.L."/>
            <person name="Jakobsen K.S."/>
            <person name="Vage D.I."/>
        </authorList>
    </citation>
    <scope>NUCLEOTIDE SEQUENCE [GENOMIC DNA]</scope>
</reference>
<proteinExistence type="inferred from homology"/>
<accession>P56442</accession>
<feature type="chain" id="PRO_0000069784" description="Melanocyte-stimulating hormone receptor">
    <location>
        <begin position="1"/>
        <end position="317"/>
    </location>
</feature>
<feature type="topological domain" description="Extracellular" evidence="2">
    <location>
        <begin position="1"/>
        <end position="37"/>
    </location>
</feature>
<feature type="transmembrane region" description="Helical; Name=1" evidence="2">
    <location>
        <begin position="38"/>
        <end position="63"/>
    </location>
</feature>
<feature type="topological domain" description="Cytoplasmic" evidence="2">
    <location>
        <begin position="64"/>
        <end position="72"/>
    </location>
</feature>
<feature type="transmembrane region" description="Helical; Name=2" evidence="2">
    <location>
        <begin position="73"/>
        <end position="93"/>
    </location>
</feature>
<feature type="topological domain" description="Extracellular" evidence="2">
    <location>
        <begin position="94"/>
        <end position="118"/>
    </location>
</feature>
<feature type="transmembrane region" description="Helical; Name=3" evidence="2">
    <location>
        <begin position="119"/>
        <end position="140"/>
    </location>
</feature>
<feature type="topological domain" description="Cytoplasmic" evidence="2">
    <location>
        <begin position="141"/>
        <end position="163"/>
    </location>
</feature>
<feature type="transmembrane region" description="Helical; Name=4" evidence="2">
    <location>
        <begin position="164"/>
        <end position="183"/>
    </location>
</feature>
<feature type="topological domain" description="Extracellular" evidence="2">
    <location>
        <begin position="184"/>
        <end position="191"/>
    </location>
</feature>
<feature type="transmembrane region" description="Helical; Name=5" evidence="2">
    <location>
        <begin position="192"/>
        <end position="211"/>
    </location>
</feature>
<feature type="topological domain" description="Cytoplasmic" evidence="2">
    <location>
        <begin position="212"/>
        <end position="240"/>
    </location>
</feature>
<feature type="transmembrane region" description="Helical; Name=6" evidence="2">
    <location>
        <begin position="241"/>
        <end position="266"/>
    </location>
</feature>
<feature type="topological domain" description="Extracellular" evidence="2">
    <location>
        <begin position="267"/>
        <end position="279"/>
    </location>
</feature>
<feature type="transmembrane region" description="Helical; Name=7" evidence="2">
    <location>
        <begin position="280"/>
        <end position="300"/>
    </location>
</feature>
<feature type="topological domain" description="Cytoplasmic" evidence="2">
    <location>
        <begin position="301"/>
        <end position="317"/>
    </location>
</feature>
<feature type="lipid moiety-binding region" description="S-palmitoyl cysteine" evidence="2">
    <location>
        <position position="315"/>
    </location>
</feature>
<feature type="glycosylation site" description="N-linked (GlcNAc...) asparagine" evidence="2">
    <location>
        <position position="29"/>
    </location>
</feature>